<comment type="function">
    <text evidence="2">Binds arsenite and regulates the expression of arsenic efflux pumps. In vitro, also binds antimony and bismuth, but not arsenate.</text>
</comment>
<comment type="subunit">
    <text evidence="2">Homodimer.</text>
</comment>
<comment type="subcellular location">
    <subcellularLocation>
        <location evidence="2">Cytoplasm</location>
    </subcellularLocation>
</comment>
<comment type="biotechnology">
    <text evidence="2">Could be used to construct robust and highly sensitive arsenic biosensors.</text>
</comment>
<keyword id="KW-0059">Arsenical resistance</keyword>
<keyword id="KW-0963">Cytoplasm</keyword>
<keyword id="KW-0238">DNA-binding</keyword>
<keyword id="KW-0479">Metal-binding</keyword>
<keyword id="KW-0480">Metal-thiolate cluster</keyword>
<keyword id="KW-1185">Reference proteome</keyword>
<keyword id="KW-0804">Transcription</keyword>
<keyword id="KW-0805">Transcription regulation</keyword>
<reference key="1">
    <citation type="journal article" date="2002" name="Environ. Microbiol.">
        <title>Complete genome sequence and comparative analysis of the metabolically versatile Pseudomonas putida KT2440.</title>
        <authorList>
            <person name="Nelson K.E."/>
            <person name="Weinel C."/>
            <person name="Paulsen I.T."/>
            <person name="Dodson R.J."/>
            <person name="Hilbert H."/>
            <person name="Martins dos Santos V.A.P."/>
            <person name="Fouts D.E."/>
            <person name="Gill S.R."/>
            <person name="Pop M."/>
            <person name="Holmes M."/>
            <person name="Brinkac L.M."/>
            <person name="Beanan M.J."/>
            <person name="DeBoy R.T."/>
            <person name="Daugherty S.C."/>
            <person name="Kolonay J.F."/>
            <person name="Madupu R."/>
            <person name="Nelson W.C."/>
            <person name="White O."/>
            <person name="Peterson J.D."/>
            <person name="Khouri H.M."/>
            <person name="Hance I."/>
            <person name="Chris Lee P."/>
            <person name="Holtzapple E.K."/>
            <person name="Scanlan D."/>
            <person name="Tran K."/>
            <person name="Moazzez A."/>
            <person name="Utterback T.R."/>
            <person name="Rizzo M."/>
            <person name="Lee K."/>
            <person name="Kosack D."/>
            <person name="Moestl D."/>
            <person name="Wedler H."/>
            <person name="Lauber J."/>
            <person name="Stjepandic D."/>
            <person name="Hoheisel J."/>
            <person name="Straetz M."/>
            <person name="Heim S."/>
            <person name="Kiewitz C."/>
            <person name="Eisen J.A."/>
            <person name="Timmis K.N."/>
            <person name="Duesterhoeft A."/>
            <person name="Tuemmler B."/>
            <person name="Fraser C.M."/>
        </authorList>
    </citation>
    <scope>NUCLEOTIDE SEQUENCE [LARGE SCALE GENOMIC DNA]</scope>
    <source>
        <strain>ATCC 47054 / DSM 6125 / CFBP 8728 / NCIMB 11950 / KT2440</strain>
    </source>
</reference>
<reference key="2">
    <citation type="journal article" date="2016" name="Appl. Environ. Microbiol.">
        <title>Paralogous regulators ArsR1 and ArsR2 of Pseudomonas putida KT2440 as a basis for arsenic biosensor development.</title>
        <authorList>
            <person name="Fernandez M."/>
            <person name="Morel B."/>
            <person name="Ramos J.L."/>
            <person name="Krell T."/>
        </authorList>
    </citation>
    <scope>FUNCTION</scope>
    <scope>DNA-BINDING</scope>
    <scope>SUBUNIT</scope>
    <scope>SUBCELLULAR LOCATION</scope>
    <scope>BIOTECHNOLOGY</scope>
    <source>
        <strain>ATCC 47054 / DSM 6125 / CFBP 8728 / NCIMB 11950 / KT2440</strain>
    </source>
</reference>
<gene>
    <name evidence="3" type="primary">arsR2</name>
    <name evidence="5" type="synonym">arsR-II</name>
    <name evidence="5" type="ordered locus">PP_2718</name>
</gene>
<sequence>MITPPDVFKSLSDETRARATLLIASLGELCVCELMCALNDSQPKISRHLAQLRSNGMLLDRRQGQWVYYRLNPELPSWVHEMLQVTLQANSQWLADNALRLKNMDGRPVRDSVCC</sequence>
<protein>
    <recommendedName>
        <fullName evidence="4">Arsenic resistance transcriptional regulator ArsR2</fullName>
    </recommendedName>
</protein>
<evidence type="ECO:0000255" key="1">
    <source>
        <dbReference type="PROSITE-ProRule" id="PRU00340"/>
    </source>
</evidence>
<evidence type="ECO:0000269" key="2">
    <source>
    </source>
</evidence>
<evidence type="ECO:0000303" key="3">
    <source>
    </source>
</evidence>
<evidence type="ECO:0000305" key="4"/>
<evidence type="ECO:0000312" key="5">
    <source>
        <dbReference type="EMBL" id="AAN68326.1"/>
    </source>
</evidence>
<organism>
    <name type="scientific">Pseudomonas putida (strain ATCC 47054 / DSM 6125 / CFBP 8728 / NCIMB 11950 / KT2440)</name>
    <dbReference type="NCBI Taxonomy" id="160488"/>
    <lineage>
        <taxon>Bacteria</taxon>
        <taxon>Pseudomonadati</taxon>
        <taxon>Pseudomonadota</taxon>
        <taxon>Gammaproteobacteria</taxon>
        <taxon>Pseudomonadales</taxon>
        <taxon>Pseudomonadaceae</taxon>
        <taxon>Pseudomonas</taxon>
    </lineage>
</organism>
<accession>Q88JD1</accession>
<proteinExistence type="evidence at protein level"/>
<name>ARSR2_PSEPK</name>
<feature type="chain" id="PRO_0000438513" description="Arsenic resistance transcriptional regulator ArsR2">
    <location>
        <begin position="1"/>
        <end position="115"/>
    </location>
</feature>
<feature type="domain" description="HTH arsR-type" evidence="1">
    <location>
        <begin position="1"/>
        <end position="90"/>
    </location>
</feature>
<feature type="DNA-binding region" description="H-T-H motif" evidence="1">
    <location>
        <begin position="31"/>
        <end position="54"/>
    </location>
</feature>
<feature type="binding site" evidence="1 4">
    <location>
        <position position="30"/>
    </location>
    <ligand>
        <name>arsenite</name>
        <dbReference type="ChEBI" id="CHEBI:29242"/>
    </ligand>
</feature>
<feature type="binding site" evidence="1 4">
    <location>
        <position position="32"/>
    </location>
    <ligand>
        <name>arsenite</name>
        <dbReference type="ChEBI" id="CHEBI:29242"/>
    </ligand>
</feature>
<dbReference type="EMBL" id="AE015451">
    <property type="protein sequence ID" value="AAN68326.1"/>
    <property type="molecule type" value="Genomic_DNA"/>
</dbReference>
<dbReference type="RefSeq" id="NP_744862.1">
    <property type="nucleotide sequence ID" value="NC_002947.4"/>
</dbReference>
<dbReference type="RefSeq" id="WP_010953634.1">
    <property type="nucleotide sequence ID" value="NZ_CP169744.1"/>
</dbReference>
<dbReference type="SMR" id="Q88JD1"/>
<dbReference type="STRING" id="160488.PP_2718"/>
<dbReference type="PaxDb" id="160488-PP_2718"/>
<dbReference type="KEGG" id="ppu:PP_2718"/>
<dbReference type="PATRIC" id="fig|160488.4.peg.2882"/>
<dbReference type="eggNOG" id="COG0640">
    <property type="taxonomic scope" value="Bacteria"/>
</dbReference>
<dbReference type="HOGENOM" id="CLU_097806_3_1_6"/>
<dbReference type="OrthoDB" id="9793058at2"/>
<dbReference type="PhylomeDB" id="Q88JD1"/>
<dbReference type="BioCyc" id="PPUT160488:G1G01-2899-MONOMER"/>
<dbReference type="Proteomes" id="UP000000556">
    <property type="component" value="Chromosome"/>
</dbReference>
<dbReference type="GO" id="GO:0005737">
    <property type="term" value="C:cytoplasm"/>
    <property type="evidence" value="ECO:0007669"/>
    <property type="project" value="UniProtKB-SubCell"/>
</dbReference>
<dbReference type="GO" id="GO:0003677">
    <property type="term" value="F:DNA binding"/>
    <property type="evidence" value="ECO:0007669"/>
    <property type="project" value="UniProtKB-KW"/>
</dbReference>
<dbReference type="GO" id="GO:0003700">
    <property type="term" value="F:DNA-binding transcription factor activity"/>
    <property type="evidence" value="ECO:0007669"/>
    <property type="project" value="InterPro"/>
</dbReference>
<dbReference type="GO" id="GO:0046872">
    <property type="term" value="F:metal ion binding"/>
    <property type="evidence" value="ECO:0007669"/>
    <property type="project" value="UniProtKB-KW"/>
</dbReference>
<dbReference type="GO" id="GO:0046685">
    <property type="term" value="P:response to arsenic-containing substance"/>
    <property type="evidence" value="ECO:0007669"/>
    <property type="project" value="UniProtKB-KW"/>
</dbReference>
<dbReference type="CDD" id="cd00090">
    <property type="entry name" value="HTH_ARSR"/>
    <property type="match status" value="1"/>
</dbReference>
<dbReference type="FunFam" id="1.10.10.10:FF:000279">
    <property type="entry name" value="Transcriptional regulator, ArsR family"/>
    <property type="match status" value="1"/>
</dbReference>
<dbReference type="Gene3D" id="1.10.10.10">
    <property type="entry name" value="Winged helix-like DNA-binding domain superfamily/Winged helix DNA-binding domain"/>
    <property type="match status" value="1"/>
</dbReference>
<dbReference type="InterPro" id="IPR011991">
    <property type="entry name" value="ArsR-like_HTH"/>
</dbReference>
<dbReference type="InterPro" id="IPR001845">
    <property type="entry name" value="HTH_ArsR_DNA-bd_dom"/>
</dbReference>
<dbReference type="InterPro" id="IPR051081">
    <property type="entry name" value="HTH_MetalResp_TranReg"/>
</dbReference>
<dbReference type="InterPro" id="IPR036388">
    <property type="entry name" value="WH-like_DNA-bd_sf"/>
</dbReference>
<dbReference type="InterPro" id="IPR036390">
    <property type="entry name" value="WH_DNA-bd_sf"/>
</dbReference>
<dbReference type="NCBIfam" id="NF033788">
    <property type="entry name" value="HTH_metalloreg"/>
    <property type="match status" value="1"/>
</dbReference>
<dbReference type="NCBIfam" id="NF007528">
    <property type="entry name" value="PRK10141.1"/>
    <property type="match status" value="1"/>
</dbReference>
<dbReference type="PANTHER" id="PTHR33154:SF18">
    <property type="entry name" value="ARSENICAL RESISTANCE OPERON REPRESSOR"/>
    <property type="match status" value="1"/>
</dbReference>
<dbReference type="PANTHER" id="PTHR33154">
    <property type="entry name" value="TRANSCRIPTIONAL REGULATOR, ARSR FAMILY"/>
    <property type="match status" value="1"/>
</dbReference>
<dbReference type="Pfam" id="PF01022">
    <property type="entry name" value="HTH_5"/>
    <property type="match status" value="1"/>
</dbReference>
<dbReference type="PRINTS" id="PR00778">
    <property type="entry name" value="HTHARSR"/>
</dbReference>
<dbReference type="SMART" id="SM00418">
    <property type="entry name" value="HTH_ARSR"/>
    <property type="match status" value="1"/>
</dbReference>
<dbReference type="SUPFAM" id="SSF46785">
    <property type="entry name" value="Winged helix' DNA-binding domain"/>
    <property type="match status" value="1"/>
</dbReference>
<dbReference type="PROSITE" id="PS50987">
    <property type="entry name" value="HTH_ARSR_2"/>
    <property type="match status" value="1"/>
</dbReference>